<sequence>MTTPNKTPPGADPKQLERTATVREIGSQAVWSLSSCKPGFGVDQLRDDNLETYWQSDGSQPHLVNIQFRRKTTVKTLCIYADYKSDESYTPSKISVRVGNNFHNLQEIRQLELVEPSGWIHVPLTDNHKKPTRTFMIQIAVLANHQNGRDTHMRQIKIYTPVEESSIGKFPRCTTIDFMMYRSIR</sequence>
<feature type="initiator methionine" description="Removed" evidence="1">
    <location>
        <position position="1"/>
    </location>
</feature>
<feature type="chain" id="PRO_0000174012" description="Anaphase-promoting complex subunit 10">
    <location>
        <begin position="2"/>
        <end position="185"/>
    </location>
</feature>
<feature type="domain" description="DOC" evidence="2">
    <location>
        <begin position="2"/>
        <end position="185"/>
    </location>
</feature>
<feature type="modified residue" description="N-acetylthreonine" evidence="1">
    <location>
        <position position="2"/>
    </location>
</feature>
<feature type="modified residue" description="N6-acetyllysine" evidence="5">
    <location>
        <position position="169"/>
    </location>
</feature>
<protein>
    <recommendedName>
        <fullName>Anaphase-promoting complex subunit 10</fullName>
        <shortName>APC10</shortName>
    </recommendedName>
    <alternativeName>
        <fullName>Cyclosome subunit 10</fullName>
    </alternativeName>
</protein>
<dbReference type="EMBL" id="AK005303">
    <property type="protein sequence ID" value="BAB23942.1"/>
    <property type="molecule type" value="mRNA"/>
</dbReference>
<dbReference type="EMBL" id="AK041373">
    <property type="protein sequence ID" value="BAC30921.1"/>
    <property type="molecule type" value="mRNA"/>
</dbReference>
<dbReference type="EMBL" id="BC031460">
    <property type="protein sequence ID" value="AAH31460.1"/>
    <property type="molecule type" value="mRNA"/>
</dbReference>
<dbReference type="CCDS" id="CCDS22439.1"/>
<dbReference type="RefSeq" id="NP_001344163.1">
    <property type="nucleotide sequence ID" value="NM_001357234.1"/>
</dbReference>
<dbReference type="RefSeq" id="NP_001344164.1">
    <property type="nucleotide sequence ID" value="NM_001357235.1"/>
</dbReference>
<dbReference type="RefSeq" id="NP_001344165.1">
    <property type="nucleotide sequence ID" value="NM_001357236.1"/>
</dbReference>
<dbReference type="RefSeq" id="NP_081180.1">
    <property type="nucleotide sequence ID" value="NM_026904.3"/>
</dbReference>
<dbReference type="RefSeq" id="XP_006531402.1">
    <property type="nucleotide sequence ID" value="XM_006531339.3"/>
</dbReference>
<dbReference type="RefSeq" id="XP_006531403.1">
    <property type="nucleotide sequence ID" value="XM_006531340.3"/>
</dbReference>
<dbReference type="RefSeq" id="XP_006531406.1">
    <property type="nucleotide sequence ID" value="XM_006531343.3"/>
</dbReference>
<dbReference type="SMR" id="Q8K2H6"/>
<dbReference type="BioGRID" id="213166">
    <property type="interactions" value="1"/>
</dbReference>
<dbReference type="CORUM" id="Q8K2H6"/>
<dbReference type="FunCoup" id="Q8K2H6">
    <property type="interactions" value="2965"/>
</dbReference>
<dbReference type="IntAct" id="Q8K2H6">
    <property type="interactions" value="2"/>
</dbReference>
<dbReference type="MINT" id="Q8K2H6"/>
<dbReference type="STRING" id="10090.ENSMUSP00000148220"/>
<dbReference type="iPTMnet" id="Q8K2H6"/>
<dbReference type="PhosphoSitePlus" id="Q8K2H6"/>
<dbReference type="SwissPalm" id="Q8K2H6"/>
<dbReference type="PaxDb" id="10090-ENSMUSP00000048244"/>
<dbReference type="PeptideAtlas" id="Q8K2H6"/>
<dbReference type="ProteomicsDB" id="296367"/>
<dbReference type="Pumba" id="Q8K2H6"/>
<dbReference type="Antibodypedia" id="7474">
    <property type="antibodies" value="231 antibodies from 31 providers"/>
</dbReference>
<dbReference type="DNASU" id="68999"/>
<dbReference type="Ensembl" id="ENSMUST00000048147.9">
    <property type="protein sequence ID" value="ENSMUSP00000048244.8"/>
    <property type="gene ID" value="ENSMUSG00000036977.9"/>
</dbReference>
<dbReference type="Ensembl" id="ENSMUST00000210812.2">
    <property type="protein sequence ID" value="ENSMUSP00000148220.2"/>
    <property type="gene ID" value="ENSMUSG00000036977.9"/>
</dbReference>
<dbReference type="GeneID" id="68999"/>
<dbReference type="KEGG" id="mmu:68999"/>
<dbReference type="UCSC" id="uc009miv.1">
    <property type="organism name" value="mouse"/>
</dbReference>
<dbReference type="AGR" id="MGI:1916249"/>
<dbReference type="CTD" id="10393"/>
<dbReference type="MGI" id="MGI:1916249">
    <property type="gene designation" value="Anapc10"/>
</dbReference>
<dbReference type="VEuPathDB" id="HostDB:ENSMUSG00000036977"/>
<dbReference type="eggNOG" id="KOG3437">
    <property type="taxonomic scope" value="Eukaryota"/>
</dbReference>
<dbReference type="GeneTree" id="ENSGT00390000013722"/>
<dbReference type="HOGENOM" id="CLU_039415_3_0_1"/>
<dbReference type="InParanoid" id="Q8K2H6"/>
<dbReference type="OMA" id="FITIEFP"/>
<dbReference type="OrthoDB" id="24948at2759"/>
<dbReference type="PhylomeDB" id="Q8K2H6"/>
<dbReference type="TreeFam" id="TF105446"/>
<dbReference type="Reactome" id="R-MMU-141430">
    <property type="pathway name" value="Inactivation of APC/C via direct inhibition of the APC/C complex"/>
</dbReference>
<dbReference type="Reactome" id="R-MMU-174048">
    <property type="pathway name" value="APC/C:Cdc20 mediated degradation of Cyclin B"/>
</dbReference>
<dbReference type="Reactome" id="R-MMU-174084">
    <property type="pathway name" value="Autodegradation of Cdh1 by Cdh1:APC/C"/>
</dbReference>
<dbReference type="Reactome" id="R-MMU-174154">
    <property type="pathway name" value="APC/C:Cdc20 mediated degradation of Securin"/>
</dbReference>
<dbReference type="Reactome" id="R-MMU-174178">
    <property type="pathway name" value="APC/C:Cdh1 mediated degradation of Cdc20 and other APC/C:Cdh1 targeted proteins in late mitosis/early G1"/>
</dbReference>
<dbReference type="Reactome" id="R-MMU-174184">
    <property type="pathway name" value="Cdc20:Phospho-APC/C mediated degradation of Cyclin A"/>
</dbReference>
<dbReference type="Reactome" id="R-MMU-176407">
    <property type="pathway name" value="Conversion from APC/C:Cdc20 to APC/C:Cdh1 in late anaphase"/>
</dbReference>
<dbReference type="Reactome" id="R-MMU-176408">
    <property type="pathway name" value="Regulation of APC/C activators between G1/S and early anaphase"/>
</dbReference>
<dbReference type="Reactome" id="R-MMU-176409">
    <property type="pathway name" value="APC/C:Cdc20 mediated degradation of mitotic proteins"/>
</dbReference>
<dbReference type="Reactome" id="R-MMU-176412">
    <property type="pathway name" value="Phosphorylation of the APC/C"/>
</dbReference>
<dbReference type="Reactome" id="R-MMU-179409">
    <property type="pathway name" value="APC-Cdc20 mediated degradation of Nek2A"/>
</dbReference>
<dbReference type="Reactome" id="R-MMU-2467813">
    <property type="pathway name" value="Separation of Sister Chromatids"/>
</dbReference>
<dbReference type="Reactome" id="R-MMU-2559582">
    <property type="pathway name" value="Senescence-Associated Secretory Phenotype (SASP)"/>
</dbReference>
<dbReference type="Reactome" id="R-MMU-68867">
    <property type="pathway name" value="Assembly of the pre-replicative complex"/>
</dbReference>
<dbReference type="Reactome" id="R-MMU-69017">
    <property type="pathway name" value="CDK-mediated phosphorylation and removal of Cdc6"/>
</dbReference>
<dbReference type="Reactome" id="R-MMU-983168">
    <property type="pathway name" value="Antigen processing: Ubiquitination &amp; Proteasome degradation"/>
</dbReference>
<dbReference type="UniPathway" id="UPA00143"/>
<dbReference type="BioGRID-ORCS" id="68999">
    <property type="hits" value="22 hits in 78 CRISPR screens"/>
</dbReference>
<dbReference type="ChiTaRS" id="Anapc10">
    <property type="organism name" value="mouse"/>
</dbReference>
<dbReference type="PRO" id="PR:Q8K2H6"/>
<dbReference type="Proteomes" id="UP000000589">
    <property type="component" value="Chromosome 8"/>
</dbReference>
<dbReference type="RNAct" id="Q8K2H6">
    <property type="molecule type" value="protein"/>
</dbReference>
<dbReference type="Bgee" id="ENSMUSG00000036977">
    <property type="expression patterns" value="Expressed in manus and 226 other cell types or tissues"/>
</dbReference>
<dbReference type="GO" id="GO:0005680">
    <property type="term" value="C:anaphase-promoting complex"/>
    <property type="evidence" value="ECO:0000250"/>
    <property type="project" value="UniProtKB"/>
</dbReference>
<dbReference type="GO" id="GO:0005737">
    <property type="term" value="C:cytoplasm"/>
    <property type="evidence" value="ECO:0000314"/>
    <property type="project" value="MGI"/>
</dbReference>
<dbReference type="GO" id="GO:0031145">
    <property type="term" value="P:anaphase-promoting complex-dependent catabolic process"/>
    <property type="evidence" value="ECO:0000250"/>
    <property type="project" value="UniProtKB"/>
</dbReference>
<dbReference type="GO" id="GO:0051301">
    <property type="term" value="P:cell division"/>
    <property type="evidence" value="ECO:0007669"/>
    <property type="project" value="UniProtKB-KW"/>
</dbReference>
<dbReference type="GO" id="GO:0141198">
    <property type="term" value="P:protein branched polyubiquitination"/>
    <property type="evidence" value="ECO:0000250"/>
    <property type="project" value="UniProtKB"/>
</dbReference>
<dbReference type="GO" id="GO:0070979">
    <property type="term" value="P:protein K11-linked ubiquitination"/>
    <property type="evidence" value="ECO:0000250"/>
    <property type="project" value="UniProtKB"/>
</dbReference>
<dbReference type="GO" id="GO:0070936">
    <property type="term" value="P:protein K48-linked ubiquitination"/>
    <property type="evidence" value="ECO:0000250"/>
    <property type="project" value="UniProtKB"/>
</dbReference>
<dbReference type="CDD" id="cd08366">
    <property type="entry name" value="APC10"/>
    <property type="match status" value="1"/>
</dbReference>
<dbReference type="FunFam" id="2.60.120.260:FF:000019">
    <property type="entry name" value="Anaphase-promoting complex subunit 10"/>
    <property type="match status" value="1"/>
</dbReference>
<dbReference type="Gene3D" id="2.60.120.260">
    <property type="entry name" value="Galactose-binding domain-like"/>
    <property type="match status" value="1"/>
</dbReference>
<dbReference type="InterPro" id="IPR016901">
    <property type="entry name" value="APC10/Doc1"/>
</dbReference>
<dbReference type="InterPro" id="IPR004939">
    <property type="entry name" value="APC_su10/DOC_dom"/>
</dbReference>
<dbReference type="InterPro" id="IPR008979">
    <property type="entry name" value="Galactose-bd-like_sf"/>
</dbReference>
<dbReference type="PANTHER" id="PTHR12936">
    <property type="entry name" value="ANAPHASE-PROMOTING COMPLEX 10"/>
    <property type="match status" value="1"/>
</dbReference>
<dbReference type="PANTHER" id="PTHR12936:SF0">
    <property type="entry name" value="ANAPHASE-PROMOTING COMPLEX SUBUNIT 10"/>
    <property type="match status" value="1"/>
</dbReference>
<dbReference type="Pfam" id="PF03256">
    <property type="entry name" value="ANAPC10"/>
    <property type="match status" value="1"/>
</dbReference>
<dbReference type="PIRSF" id="PIRSF028841">
    <property type="entry name" value="APC10_sub"/>
    <property type="match status" value="1"/>
</dbReference>
<dbReference type="SMART" id="SM01337">
    <property type="entry name" value="APC10"/>
    <property type="match status" value="1"/>
</dbReference>
<dbReference type="SUPFAM" id="SSF49785">
    <property type="entry name" value="Galactose-binding domain-like"/>
    <property type="match status" value="1"/>
</dbReference>
<dbReference type="PROSITE" id="PS51284">
    <property type="entry name" value="DOC"/>
    <property type="match status" value="1"/>
</dbReference>
<accession>Q8K2H6</accession>
<accession>Q9CW24</accession>
<gene>
    <name type="primary">Anapc10</name>
    <name type="synonym">Apc10</name>
</gene>
<keyword id="KW-0007">Acetylation</keyword>
<keyword id="KW-0131">Cell cycle</keyword>
<keyword id="KW-0132">Cell division</keyword>
<keyword id="KW-0498">Mitosis</keyword>
<keyword id="KW-1185">Reference proteome</keyword>
<keyword id="KW-0833">Ubl conjugation pathway</keyword>
<name>APC10_MOUSE</name>
<proteinExistence type="evidence at protein level"/>
<comment type="function">
    <text evidence="1">Component of the anaphase promoting complex/cyclosome (APC/C), a cell cycle-regulated E3 ubiquitin ligase that controls progression through mitosis and the G1 phase of the cell cycle. The APC/C complex acts by mediating ubiquitination and subsequent degradation of target proteins: it mainly mediates the formation of 'Lys-11'-linked polyubiquitin chains and, to a lower extent, the formation of 'Lys-48'- and 'Lys-63'-linked polyubiquitin chains. The APC/C complex catalyzes assembly of branched 'Lys-11'-/'Lys-48'-linked branched ubiquitin chains on target proteins.</text>
</comment>
<comment type="pathway">
    <text evidence="1">Protein modification; protein ubiquitination.</text>
</comment>
<comment type="subunit">
    <text evidence="1 3">The mammalian APC/C is composed at least of 14 distinct subunits ANAPC1, ANAPC2, CDC27/APC3, ANAPC4, ANAPC5, CDC16/APC6, ANAPC7, CDC23/APC8, ANAPC10, ANAPC11, CDC26/APC12, ANAPC13, ANAPC15 and ANAPC16 that assemble into a complex of at least 19 chains with a combined molecular mass of around 1.2 MDa; APC/C interacts with FZR1 and FBXO5. The C-terminus of APC10 binds to CDC27/APC3 (By similarity). Interacts with PIWIL1; interaction only takes place when PIWIL1 binds piRNA (PubMed:23328397). Interacts with FBXO43; the interaction is direct.</text>
</comment>
<comment type="similarity">
    <text evidence="4">Belongs to the APC10 family.</text>
</comment>
<evidence type="ECO:0000250" key="1">
    <source>
        <dbReference type="UniProtKB" id="Q9UM13"/>
    </source>
</evidence>
<evidence type="ECO:0000255" key="2">
    <source>
        <dbReference type="PROSITE-ProRule" id="PRU00614"/>
    </source>
</evidence>
<evidence type="ECO:0000269" key="3">
    <source>
    </source>
</evidence>
<evidence type="ECO:0000305" key="4"/>
<evidence type="ECO:0007744" key="5">
    <source>
    </source>
</evidence>
<reference key="1">
    <citation type="journal article" date="2005" name="Science">
        <title>The transcriptional landscape of the mammalian genome.</title>
        <authorList>
            <person name="Carninci P."/>
            <person name="Kasukawa T."/>
            <person name="Katayama S."/>
            <person name="Gough J."/>
            <person name="Frith M.C."/>
            <person name="Maeda N."/>
            <person name="Oyama R."/>
            <person name="Ravasi T."/>
            <person name="Lenhard B."/>
            <person name="Wells C."/>
            <person name="Kodzius R."/>
            <person name="Shimokawa K."/>
            <person name="Bajic V.B."/>
            <person name="Brenner S.E."/>
            <person name="Batalov S."/>
            <person name="Forrest A.R."/>
            <person name="Zavolan M."/>
            <person name="Davis M.J."/>
            <person name="Wilming L.G."/>
            <person name="Aidinis V."/>
            <person name="Allen J.E."/>
            <person name="Ambesi-Impiombato A."/>
            <person name="Apweiler R."/>
            <person name="Aturaliya R.N."/>
            <person name="Bailey T.L."/>
            <person name="Bansal M."/>
            <person name="Baxter L."/>
            <person name="Beisel K.W."/>
            <person name="Bersano T."/>
            <person name="Bono H."/>
            <person name="Chalk A.M."/>
            <person name="Chiu K.P."/>
            <person name="Choudhary V."/>
            <person name="Christoffels A."/>
            <person name="Clutterbuck D.R."/>
            <person name="Crowe M.L."/>
            <person name="Dalla E."/>
            <person name="Dalrymple B.P."/>
            <person name="de Bono B."/>
            <person name="Della Gatta G."/>
            <person name="di Bernardo D."/>
            <person name="Down T."/>
            <person name="Engstrom P."/>
            <person name="Fagiolini M."/>
            <person name="Faulkner G."/>
            <person name="Fletcher C.F."/>
            <person name="Fukushima T."/>
            <person name="Furuno M."/>
            <person name="Futaki S."/>
            <person name="Gariboldi M."/>
            <person name="Georgii-Hemming P."/>
            <person name="Gingeras T.R."/>
            <person name="Gojobori T."/>
            <person name="Green R.E."/>
            <person name="Gustincich S."/>
            <person name="Harbers M."/>
            <person name="Hayashi Y."/>
            <person name="Hensch T.K."/>
            <person name="Hirokawa N."/>
            <person name="Hill D."/>
            <person name="Huminiecki L."/>
            <person name="Iacono M."/>
            <person name="Ikeo K."/>
            <person name="Iwama A."/>
            <person name="Ishikawa T."/>
            <person name="Jakt M."/>
            <person name="Kanapin A."/>
            <person name="Katoh M."/>
            <person name="Kawasawa Y."/>
            <person name="Kelso J."/>
            <person name="Kitamura H."/>
            <person name="Kitano H."/>
            <person name="Kollias G."/>
            <person name="Krishnan S.P."/>
            <person name="Kruger A."/>
            <person name="Kummerfeld S.K."/>
            <person name="Kurochkin I.V."/>
            <person name="Lareau L.F."/>
            <person name="Lazarevic D."/>
            <person name="Lipovich L."/>
            <person name="Liu J."/>
            <person name="Liuni S."/>
            <person name="McWilliam S."/>
            <person name="Madan Babu M."/>
            <person name="Madera M."/>
            <person name="Marchionni L."/>
            <person name="Matsuda H."/>
            <person name="Matsuzawa S."/>
            <person name="Miki H."/>
            <person name="Mignone F."/>
            <person name="Miyake S."/>
            <person name="Morris K."/>
            <person name="Mottagui-Tabar S."/>
            <person name="Mulder N."/>
            <person name="Nakano N."/>
            <person name="Nakauchi H."/>
            <person name="Ng P."/>
            <person name="Nilsson R."/>
            <person name="Nishiguchi S."/>
            <person name="Nishikawa S."/>
            <person name="Nori F."/>
            <person name="Ohara O."/>
            <person name="Okazaki Y."/>
            <person name="Orlando V."/>
            <person name="Pang K.C."/>
            <person name="Pavan W.J."/>
            <person name="Pavesi G."/>
            <person name="Pesole G."/>
            <person name="Petrovsky N."/>
            <person name="Piazza S."/>
            <person name="Reed J."/>
            <person name="Reid J.F."/>
            <person name="Ring B.Z."/>
            <person name="Ringwald M."/>
            <person name="Rost B."/>
            <person name="Ruan Y."/>
            <person name="Salzberg S.L."/>
            <person name="Sandelin A."/>
            <person name="Schneider C."/>
            <person name="Schoenbach C."/>
            <person name="Sekiguchi K."/>
            <person name="Semple C.A."/>
            <person name="Seno S."/>
            <person name="Sessa L."/>
            <person name="Sheng Y."/>
            <person name="Shibata Y."/>
            <person name="Shimada H."/>
            <person name="Shimada K."/>
            <person name="Silva D."/>
            <person name="Sinclair B."/>
            <person name="Sperling S."/>
            <person name="Stupka E."/>
            <person name="Sugiura K."/>
            <person name="Sultana R."/>
            <person name="Takenaka Y."/>
            <person name="Taki K."/>
            <person name="Tammoja K."/>
            <person name="Tan S.L."/>
            <person name="Tang S."/>
            <person name="Taylor M.S."/>
            <person name="Tegner J."/>
            <person name="Teichmann S.A."/>
            <person name="Ueda H.R."/>
            <person name="van Nimwegen E."/>
            <person name="Verardo R."/>
            <person name="Wei C.L."/>
            <person name="Yagi K."/>
            <person name="Yamanishi H."/>
            <person name="Zabarovsky E."/>
            <person name="Zhu S."/>
            <person name="Zimmer A."/>
            <person name="Hide W."/>
            <person name="Bult C."/>
            <person name="Grimmond S.M."/>
            <person name="Teasdale R.D."/>
            <person name="Liu E.T."/>
            <person name="Brusic V."/>
            <person name="Quackenbush J."/>
            <person name="Wahlestedt C."/>
            <person name="Mattick J.S."/>
            <person name="Hume D.A."/>
            <person name="Kai C."/>
            <person name="Sasaki D."/>
            <person name="Tomaru Y."/>
            <person name="Fukuda S."/>
            <person name="Kanamori-Katayama M."/>
            <person name="Suzuki M."/>
            <person name="Aoki J."/>
            <person name="Arakawa T."/>
            <person name="Iida J."/>
            <person name="Imamura K."/>
            <person name="Itoh M."/>
            <person name="Kato T."/>
            <person name="Kawaji H."/>
            <person name="Kawagashira N."/>
            <person name="Kawashima T."/>
            <person name="Kojima M."/>
            <person name="Kondo S."/>
            <person name="Konno H."/>
            <person name="Nakano K."/>
            <person name="Ninomiya N."/>
            <person name="Nishio T."/>
            <person name="Okada M."/>
            <person name="Plessy C."/>
            <person name="Shibata K."/>
            <person name="Shiraki T."/>
            <person name="Suzuki S."/>
            <person name="Tagami M."/>
            <person name="Waki K."/>
            <person name="Watahiki A."/>
            <person name="Okamura-Oho Y."/>
            <person name="Suzuki H."/>
            <person name="Kawai J."/>
            <person name="Hayashizaki Y."/>
        </authorList>
    </citation>
    <scope>NUCLEOTIDE SEQUENCE [LARGE SCALE MRNA]</scope>
    <source>
        <strain>C57BL/6J</strain>
        <tissue>Thymus</tissue>
    </source>
</reference>
<reference key="2">
    <citation type="journal article" date="2004" name="Genome Res.">
        <title>The status, quality, and expansion of the NIH full-length cDNA project: the Mammalian Gene Collection (MGC).</title>
        <authorList>
            <consortium name="The MGC Project Team"/>
        </authorList>
    </citation>
    <scope>NUCLEOTIDE SEQUENCE [LARGE SCALE MRNA]</scope>
</reference>
<reference key="3">
    <citation type="journal article" date="2013" name="Dev. Cell">
        <title>piRNA-triggered MIWI ubiquitination and removal by APC/C in late spermatogenesis.</title>
        <authorList>
            <person name="Zhao S."/>
            <person name="Gou L.T."/>
            <person name="Zhang M."/>
            <person name="Zu L.D."/>
            <person name="Hua M.M."/>
            <person name="Hua Y."/>
            <person name="Shi H.J."/>
            <person name="Li Y."/>
            <person name="Li J."/>
            <person name="Li D."/>
            <person name="Wang E.D."/>
            <person name="Liu M.F."/>
        </authorList>
    </citation>
    <scope>INTERACTION WITH PIWIL1</scope>
</reference>
<reference key="4">
    <citation type="journal article" date="2013" name="Mol. Cell">
        <title>SIRT5-mediated lysine desuccinylation impacts diverse metabolic pathways.</title>
        <authorList>
            <person name="Park J."/>
            <person name="Chen Y."/>
            <person name="Tishkoff D.X."/>
            <person name="Peng C."/>
            <person name="Tan M."/>
            <person name="Dai L."/>
            <person name="Xie Z."/>
            <person name="Zhang Y."/>
            <person name="Zwaans B.M."/>
            <person name="Skinner M.E."/>
            <person name="Lombard D.B."/>
            <person name="Zhao Y."/>
        </authorList>
    </citation>
    <scope>ACETYLATION [LARGE SCALE ANALYSIS] AT LYS-169</scope>
    <scope>IDENTIFICATION BY MASS SPECTROMETRY [LARGE SCALE ANALYSIS]</scope>
    <source>
        <tissue>Embryonic fibroblast</tissue>
    </source>
</reference>
<organism>
    <name type="scientific">Mus musculus</name>
    <name type="common">Mouse</name>
    <dbReference type="NCBI Taxonomy" id="10090"/>
    <lineage>
        <taxon>Eukaryota</taxon>
        <taxon>Metazoa</taxon>
        <taxon>Chordata</taxon>
        <taxon>Craniata</taxon>
        <taxon>Vertebrata</taxon>
        <taxon>Euteleostomi</taxon>
        <taxon>Mammalia</taxon>
        <taxon>Eutheria</taxon>
        <taxon>Euarchontoglires</taxon>
        <taxon>Glires</taxon>
        <taxon>Rodentia</taxon>
        <taxon>Myomorpha</taxon>
        <taxon>Muroidea</taxon>
        <taxon>Muridae</taxon>
        <taxon>Murinae</taxon>
        <taxon>Mus</taxon>
        <taxon>Mus</taxon>
    </lineage>
</organism>